<comment type="function">
    <text evidence="1 3">Positive regulator of apoptosis. Plays a role in the Wnt signaling pathway, negatively regulating the expression of Wnt signaling components CTNNB1 and HMGA1 (PubMed:25569233). Involved in cell cycle progression, maintenance of the nuclear structure and stem cell differentiation (PubMed:25569233). May play a role in lung tumor development or progression (By similarity).</text>
</comment>
<comment type="interaction">
    <interactant intactId="EBI-2560588">
        <id>Q9BQE9</id>
    </interactant>
    <interactant intactId="EBI-5651459">
        <id>P43357</id>
        <label>MAGEA3</label>
    </interactant>
    <organismsDiffer>false</organismsDiffer>
    <experiments>3</experiments>
</comment>
<comment type="interaction">
    <interactant intactId="EBI-2560588">
        <id>Q9BQE9</id>
    </interactant>
    <interactant intactId="EBI-1045155">
        <id>P43360</id>
        <label>MAGEA6</label>
    </interactant>
    <organismsDiffer>false</organismsDiffer>
    <experiments>6</experiments>
</comment>
<comment type="interaction">
    <interactant intactId="EBI-2560588">
        <id>Q9BQE9</id>
    </interactant>
    <interactant intactId="EBI-750109">
        <id>Q9NYB0</id>
        <label>TERF2IP</label>
    </interactant>
    <organismsDiffer>false</organismsDiffer>
    <experiments>2</experiments>
</comment>
<comment type="alternative products">
    <event type="alternative splicing"/>
    <isoform>
        <id>Q9BQE9-1</id>
        <name>1</name>
        <sequence type="displayed"/>
    </isoform>
    <isoform>
        <id>Q9BQE9-2</id>
        <name>2</name>
        <sequence type="described" ref="VSP_019276 VSP_019277"/>
    </isoform>
    <isoform>
        <id>Q9BQE9-3</id>
        <name>3</name>
        <sequence type="described" ref="VSP_019278 VSP_019279"/>
    </isoform>
    <isoform>
        <id>Q9BQE9-4</id>
        <name>4</name>
        <sequence type="described" ref="VSP_045923"/>
    </isoform>
</comment>
<comment type="tissue specificity">
    <text evidence="5 6">Ubiquitous.</text>
</comment>
<comment type="disease">
    <text evidence="5 6">BCL7B is located in the Williams-Beuren syndrome (WBS) critical region. WBS results from a hemizygous deletion of several genes on chromosome 7q11.23, thought to arise as a consequence of unequal crossing over between highly homologous low-copy repeat sequences flanking the deleted region. Haploinsufficiency of BCL7B may be the cause of certain cardiovascular and musculo-skeletal abnormalities observed in the disease.</text>
</comment>
<comment type="allergen">
    <text evidence="4">Causes an allergic reaction in human. Binds to IgE from atopic dermatitis (AD) patients. Identified as an IgE autoantigen in atopic dermatitis (AD) patients with severe skin manifestations.</text>
</comment>
<comment type="similarity">
    <text evidence="10">Belongs to the BCL7 family.</text>
</comment>
<comment type="online information" name="Atlas of Genetics and Cytogenetics in Oncology and Haematology">
    <link uri="https://atlasgeneticsoncology.org/gene/779/BCL7B"/>
</comment>
<dbReference type="EMBL" id="X89985">
    <property type="protein sequence ID" value="CAA62012.1"/>
    <property type="molecule type" value="mRNA"/>
</dbReference>
<dbReference type="EMBL" id="AJ223979">
    <property type="protein sequence ID" value="CAA11753.1"/>
    <property type="molecule type" value="mRNA"/>
</dbReference>
<dbReference type="EMBL" id="BX333744">
    <property type="status" value="NOT_ANNOTATED_CDS"/>
    <property type="molecule type" value="mRNA"/>
</dbReference>
<dbReference type="EMBL" id="AK123497">
    <property type="status" value="NOT_ANNOTATED_CDS"/>
    <property type="molecule type" value="mRNA"/>
</dbReference>
<dbReference type="EMBL" id="AK290091">
    <property type="protein sequence ID" value="BAF82780.1"/>
    <property type="molecule type" value="mRNA"/>
</dbReference>
<dbReference type="EMBL" id="AC005089">
    <property type="status" value="NOT_ANNOTATED_CDS"/>
    <property type="molecule type" value="Genomic_DNA"/>
</dbReference>
<dbReference type="EMBL" id="CH471200">
    <property type="protein sequence ID" value="EAW69676.1"/>
    <property type="molecule type" value="Genomic_DNA"/>
</dbReference>
<dbReference type="EMBL" id="CH471200">
    <property type="protein sequence ID" value="EAW69678.1"/>
    <property type="molecule type" value="Genomic_DNA"/>
</dbReference>
<dbReference type="EMBL" id="BC000956">
    <property type="protein sequence ID" value="AAH00956.1"/>
    <property type="molecule type" value="mRNA"/>
</dbReference>
<dbReference type="EMBL" id="BC001967">
    <property type="protein sequence ID" value="AAH01967.1"/>
    <property type="molecule type" value="mRNA"/>
</dbReference>
<dbReference type="EMBL" id="BC009548">
    <property type="protein sequence ID" value="AAH09548.1"/>
    <property type="molecule type" value="mRNA"/>
</dbReference>
<dbReference type="CCDS" id="CCDS5550.1">
    <molecule id="Q9BQE9-1"/>
</dbReference>
<dbReference type="CCDS" id="CCDS56489.1">
    <molecule id="Q9BQE9-4"/>
</dbReference>
<dbReference type="PIR" id="S58284">
    <property type="entry name" value="S58284"/>
</dbReference>
<dbReference type="RefSeq" id="NP_001184173.1">
    <molecule id="Q9BQE9-4"/>
    <property type="nucleotide sequence ID" value="NM_001197244.2"/>
</dbReference>
<dbReference type="RefSeq" id="NP_001287990.1">
    <property type="nucleotide sequence ID" value="NM_001301061.1"/>
</dbReference>
<dbReference type="RefSeq" id="NP_001698.2">
    <molecule id="Q9BQE9-1"/>
    <property type="nucleotide sequence ID" value="NM_001707.3"/>
</dbReference>
<dbReference type="BioGRID" id="114692">
    <property type="interactions" value="170"/>
</dbReference>
<dbReference type="ComplexPortal" id="CPX-1195">
    <property type="entry name" value="Embryonic stem cell-specific SWI/SNF ATP-dependent chromatin remodeling complex"/>
</dbReference>
<dbReference type="ComplexPortal" id="CPX-4084">
    <property type="entry name" value="GBAF (SWI/SNF) ATP-dependent chromatin remodeling complex, ACTL6A-BICRA-SMARCA2 variant"/>
</dbReference>
<dbReference type="ComplexPortal" id="CPX-4203">
    <property type="entry name" value="GBAF (SWI/SNF) ATP-dependent chromatin remodeling complex, ACTL6A-BICRAL-SMARCA2 variant"/>
</dbReference>
<dbReference type="ComplexPortal" id="CPX-4206">
    <property type="entry name" value="GBAF (SWI/SNF) ATP-dependent chromatin remodeling complex, ACTL6A-BICRA-SMARCA4 variant"/>
</dbReference>
<dbReference type="ComplexPortal" id="CPX-4207">
    <property type="entry name" value="GBAF (SWI/SNF) ATP-dependent chromatin remodeling complex, ACTL6A-BICRAL-SMARCA4 variant"/>
</dbReference>
<dbReference type="ComplexPortal" id="CPX-4223">
    <property type="entry name" value="GBAF (SWI/SNF) ATP-dependent chromatin remodeling complex, ACTL6B-BICRA-SMARCA2 variant"/>
</dbReference>
<dbReference type="ComplexPortal" id="CPX-4224">
    <property type="entry name" value="GBAF (SWI/SNF) ATP-dependent chromatin remodeling complex, ACTL6B-BICRAL-SMARCA2 variant"/>
</dbReference>
<dbReference type="ComplexPortal" id="CPX-4225">
    <property type="entry name" value="GBAF (SWI/SNF) ATP-dependent chromatin remodeling complex, ACTL6B-BICRA-SMARCA4 variant"/>
</dbReference>
<dbReference type="ComplexPortal" id="CPX-4226">
    <property type="entry name" value="GBAF (SWI/SNF) ATP-dependent chromatin remodeling complex, ACTL6B-BICRAL-SMARCA4 variant"/>
</dbReference>
<dbReference type="FunCoup" id="Q9BQE9">
    <property type="interactions" value="1640"/>
</dbReference>
<dbReference type="IntAct" id="Q9BQE9">
    <property type="interactions" value="78"/>
</dbReference>
<dbReference type="MINT" id="Q9BQE9"/>
<dbReference type="STRING" id="9606.ENSP00000411073"/>
<dbReference type="ChEMBL" id="CHEMBL4630852"/>
<dbReference type="Allergome" id="3324">
    <property type="allergen name" value="Hom s 3.0101"/>
</dbReference>
<dbReference type="Allergome" id="413">
    <property type="allergen name" value="Hom s 3"/>
</dbReference>
<dbReference type="GlyGen" id="Q9BQE9">
    <property type="glycosylation" value="3 sites, 1 O-linked glycan (3 sites)"/>
</dbReference>
<dbReference type="iPTMnet" id="Q9BQE9"/>
<dbReference type="PhosphoSitePlus" id="Q9BQE9"/>
<dbReference type="BioMuta" id="BCL7B"/>
<dbReference type="jPOST" id="Q9BQE9"/>
<dbReference type="MassIVE" id="Q9BQE9"/>
<dbReference type="PaxDb" id="9606-ENSP00000411073"/>
<dbReference type="PeptideAtlas" id="Q9BQE9"/>
<dbReference type="ProteomicsDB" id="11968"/>
<dbReference type="ProteomicsDB" id="78666">
    <molecule id="Q9BQE9-1"/>
</dbReference>
<dbReference type="ProteomicsDB" id="78667">
    <molecule id="Q9BQE9-2"/>
</dbReference>
<dbReference type="ProteomicsDB" id="78668">
    <molecule id="Q9BQE9-3"/>
</dbReference>
<dbReference type="Pumba" id="Q9BQE9"/>
<dbReference type="Antibodypedia" id="28430">
    <property type="antibodies" value="258 antibodies from 26 providers"/>
</dbReference>
<dbReference type="DNASU" id="9275"/>
<dbReference type="Ensembl" id="ENST00000223368.7">
    <molecule id="Q9BQE9-1"/>
    <property type="protein sequence ID" value="ENSP00000223368.2"/>
    <property type="gene ID" value="ENSG00000106635.8"/>
</dbReference>
<dbReference type="Ensembl" id="ENST00000411832.5">
    <molecule id="Q9BQE9-4"/>
    <property type="protein sequence ID" value="ENSP00000393230.1"/>
    <property type="gene ID" value="ENSG00000106635.8"/>
</dbReference>
<dbReference type="GeneID" id="9275"/>
<dbReference type="KEGG" id="hsa:9275"/>
<dbReference type="MANE-Select" id="ENST00000223368.7">
    <property type="protein sequence ID" value="ENSP00000223368.2"/>
    <property type="RefSeq nucleotide sequence ID" value="NM_001707.4"/>
    <property type="RefSeq protein sequence ID" value="NP_001698.2"/>
</dbReference>
<dbReference type="UCSC" id="uc003tyf.3">
    <molecule id="Q9BQE9-1"/>
    <property type="organism name" value="human"/>
</dbReference>
<dbReference type="AGR" id="HGNC:1005"/>
<dbReference type="CTD" id="9275"/>
<dbReference type="DisGeNET" id="9275"/>
<dbReference type="GeneCards" id="BCL7B"/>
<dbReference type="HGNC" id="HGNC:1005">
    <property type="gene designation" value="BCL7B"/>
</dbReference>
<dbReference type="HPA" id="ENSG00000106635">
    <property type="expression patterns" value="Low tissue specificity"/>
</dbReference>
<dbReference type="MIM" id="605846">
    <property type="type" value="gene"/>
</dbReference>
<dbReference type="neXtProt" id="NX_Q9BQE9"/>
<dbReference type="OpenTargets" id="ENSG00000106635"/>
<dbReference type="PharmGKB" id="PA25315"/>
<dbReference type="VEuPathDB" id="HostDB:ENSG00000106635"/>
<dbReference type="eggNOG" id="KOG4095">
    <property type="taxonomic scope" value="Eukaryota"/>
</dbReference>
<dbReference type="GeneTree" id="ENSGT00390000002172"/>
<dbReference type="HOGENOM" id="CLU_110835_1_0_1"/>
<dbReference type="InParanoid" id="Q9BQE9"/>
<dbReference type="OMA" id="WVPVTDN"/>
<dbReference type="OrthoDB" id="5989898at2759"/>
<dbReference type="PAN-GO" id="Q9BQE9">
    <property type="GO annotations" value="0 GO annotations based on evolutionary models"/>
</dbReference>
<dbReference type="PhylomeDB" id="Q9BQE9"/>
<dbReference type="TreeFam" id="TF317441"/>
<dbReference type="PathwayCommons" id="Q9BQE9"/>
<dbReference type="Reactome" id="R-HSA-9824585">
    <property type="pathway name" value="Regulation of MITF-M-dependent genes involved in pigmentation"/>
</dbReference>
<dbReference type="Reactome" id="R-HSA-9845323">
    <property type="pathway name" value="Regulation of endogenous retroelements by Piwi-interacting RNAs (piRNAs)"/>
</dbReference>
<dbReference type="SignaLink" id="Q9BQE9"/>
<dbReference type="SIGNOR" id="Q9BQE9"/>
<dbReference type="BioGRID-ORCS" id="9275">
    <property type="hits" value="20 hits in 1152 CRISPR screens"/>
</dbReference>
<dbReference type="ChiTaRS" id="BCL7B">
    <property type="organism name" value="human"/>
</dbReference>
<dbReference type="GenomeRNAi" id="9275"/>
<dbReference type="Pharos" id="Q9BQE9">
    <property type="development level" value="Tbio"/>
</dbReference>
<dbReference type="PRO" id="PR:Q9BQE9"/>
<dbReference type="Proteomes" id="UP000005640">
    <property type="component" value="Chromosome 7"/>
</dbReference>
<dbReference type="RNAct" id="Q9BQE9">
    <property type="molecule type" value="protein"/>
</dbReference>
<dbReference type="Bgee" id="ENSG00000106635">
    <property type="expression patterns" value="Expressed in lower esophagus muscularis layer and 200 other cell types or tissues"/>
</dbReference>
<dbReference type="ExpressionAtlas" id="Q9BQE9">
    <property type="expression patterns" value="baseline and differential"/>
</dbReference>
<dbReference type="GO" id="GO:0000785">
    <property type="term" value="C:chromatin"/>
    <property type="evidence" value="ECO:0000303"/>
    <property type="project" value="ComplexPortal"/>
</dbReference>
<dbReference type="GO" id="GO:0140288">
    <property type="term" value="C:GBAF complex"/>
    <property type="evidence" value="ECO:0000303"/>
    <property type="project" value="ComplexPortal"/>
</dbReference>
<dbReference type="GO" id="GO:0005654">
    <property type="term" value="C:nucleoplasm"/>
    <property type="evidence" value="ECO:0000304"/>
    <property type="project" value="Reactome"/>
</dbReference>
<dbReference type="GO" id="GO:0016514">
    <property type="term" value="C:SWI/SNF complex"/>
    <property type="evidence" value="ECO:0000314"/>
    <property type="project" value="UniProtKB"/>
</dbReference>
<dbReference type="GO" id="GO:0003779">
    <property type="term" value="F:actin binding"/>
    <property type="evidence" value="ECO:0000303"/>
    <property type="project" value="UniProtKB"/>
</dbReference>
<dbReference type="GO" id="GO:0006915">
    <property type="term" value="P:apoptotic process"/>
    <property type="evidence" value="ECO:0007669"/>
    <property type="project" value="UniProtKB-KW"/>
</dbReference>
<dbReference type="GO" id="GO:0030154">
    <property type="term" value="P:cell differentiation"/>
    <property type="evidence" value="ECO:0007669"/>
    <property type="project" value="UniProtKB-KW"/>
</dbReference>
<dbReference type="GO" id="GO:0006338">
    <property type="term" value="P:chromatin remodeling"/>
    <property type="evidence" value="ECO:0000303"/>
    <property type="project" value="ComplexPortal"/>
</dbReference>
<dbReference type="GO" id="GO:0045596">
    <property type="term" value="P:negative regulation of cell differentiation"/>
    <property type="evidence" value="ECO:0000303"/>
    <property type="project" value="ComplexPortal"/>
</dbReference>
<dbReference type="GO" id="GO:0008284">
    <property type="term" value="P:positive regulation of cell population proliferation"/>
    <property type="evidence" value="ECO:0000303"/>
    <property type="project" value="ComplexPortal"/>
</dbReference>
<dbReference type="GO" id="GO:2000781">
    <property type="term" value="P:positive regulation of double-strand break repair"/>
    <property type="evidence" value="ECO:0000303"/>
    <property type="project" value="ComplexPortal"/>
</dbReference>
<dbReference type="GO" id="GO:1902459">
    <property type="term" value="P:positive regulation of stem cell population maintenance"/>
    <property type="evidence" value="ECO:0000303"/>
    <property type="project" value="ComplexPortal"/>
</dbReference>
<dbReference type="GO" id="GO:0070316">
    <property type="term" value="P:regulation of G0 to G1 transition"/>
    <property type="evidence" value="ECO:0000303"/>
    <property type="project" value="ComplexPortal"/>
</dbReference>
<dbReference type="GO" id="GO:2000045">
    <property type="term" value="P:regulation of G1/S transition of mitotic cell cycle"/>
    <property type="evidence" value="ECO:0000303"/>
    <property type="project" value="ComplexPortal"/>
</dbReference>
<dbReference type="GO" id="GO:0030071">
    <property type="term" value="P:regulation of mitotic metaphase/anaphase transition"/>
    <property type="evidence" value="ECO:0000303"/>
    <property type="project" value="ComplexPortal"/>
</dbReference>
<dbReference type="GO" id="GO:2000819">
    <property type="term" value="P:regulation of nucleotide-excision repair"/>
    <property type="evidence" value="ECO:0000303"/>
    <property type="project" value="ComplexPortal"/>
</dbReference>
<dbReference type="GO" id="GO:0006357">
    <property type="term" value="P:regulation of transcription by RNA polymerase II"/>
    <property type="evidence" value="ECO:0000303"/>
    <property type="project" value="ComplexPortal"/>
</dbReference>
<dbReference type="GO" id="GO:0016055">
    <property type="term" value="P:Wnt signaling pathway"/>
    <property type="evidence" value="ECO:0007669"/>
    <property type="project" value="UniProtKB-KW"/>
</dbReference>
<dbReference type="InterPro" id="IPR006804">
    <property type="entry name" value="BCL7"/>
</dbReference>
<dbReference type="PANTHER" id="PTHR12767:SF5">
    <property type="entry name" value="B-CELL CLL_LYMPHOMA 7 PROTEIN FAMILY MEMBER B"/>
    <property type="match status" value="1"/>
</dbReference>
<dbReference type="PANTHER" id="PTHR12767">
    <property type="entry name" value="BCL7 RELATED"/>
    <property type="match status" value="1"/>
</dbReference>
<dbReference type="Pfam" id="PF04714">
    <property type="entry name" value="BCL_N"/>
    <property type="match status" value="1"/>
</dbReference>
<keyword id="KW-0020">Allergen</keyword>
<keyword id="KW-0025">Alternative splicing</keyword>
<keyword id="KW-0053">Apoptosis</keyword>
<keyword id="KW-0221">Differentiation</keyword>
<keyword id="KW-0597">Phosphoprotein</keyword>
<keyword id="KW-1267">Proteomics identification</keyword>
<keyword id="KW-1185">Reference proteome</keyword>
<keyword id="KW-0856">Williams-Beuren syndrome</keyword>
<keyword id="KW-0879">Wnt signaling pathway</keyword>
<gene>
    <name type="primary">BCL7B</name>
</gene>
<proteinExistence type="evidence at protein level"/>
<feature type="chain" id="PRO_0000239829" description="B-cell CLL/lymphoma 7 protein family member B">
    <location>
        <begin position="1"/>
        <end position="202"/>
    </location>
</feature>
<feature type="region of interest" description="Disordered" evidence="2">
    <location>
        <begin position="53"/>
        <end position="202"/>
    </location>
</feature>
<feature type="compositionally biased region" description="Polar residues" evidence="2">
    <location>
        <begin position="90"/>
        <end position="99"/>
    </location>
</feature>
<feature type="compositionally biased region" description="Low complexity" evidence="2">
    <location>
        <begin position="107"/>
        <end position="123"/>
    </location>
</feature>
<feature type="modified residue" description="Phosphoserine" evidence="11 12 13">
    <location>
        <position position="114"/>
    </location>
</feature>
<feature type="modified residue" description="Phosphoserine" evidence="12">
    <location>
        <position position="118"/>
    </location>
</feature>
<feature type="modified residue" description="Phosphoserine" evidence="1">
    <location>
        <position position="120"/>
    </location>
</feature>
<feature type="modified residue" description="Phosphoserine" evidence="12 13">
    <location>
        <position position="122"/>
    </location>
</feature>
<feature type="modified residue" description="Phosphoserine" evidence="1">
    <location>
        <position position="127"/>
    </location>
</feature>
<feature type="modified residue" description="Phosphoserine" evidence="1">
    <location>
        <position position="148"/>
    </location>
</feature>
<feature type="modified residue" description="Phosphoserine" evidence="1">
    <location>
        <position position="152"/>
    </location>
</feature>
<feature type="splice variant" id="VSP_019276" description="In isoform 2." evidence="7">
    <location>
        <begin position="1"/>
        <end position="60"/>
    </location>
</feature>
<feature type="splice variant" id="VSP_019277" description="In isoform 2." evidence="7">
    <original>KSNSSAAREPNGFPSDASANSSLLLEFQ</original>
    <variation>MPGPWLCPEFLLRKMTTLSCCLCSVWFS</variation>
    <location>
        <begin position="61"/>
        <end position="88"/>
    </location>
</feature>
<feature type="splice variant" id="VSP_045923" description="In isoform 4." evidence="9">
    <location>
        <begin position="89"/>
        <end position="145"/>
    </location>
</feature>
<feature type="splice variant" id="VSP_019278" description="In isoform 3." evidence="8">
    <original>K</original>
    <variation>F</variation>
    <location>
        <position position="163"/>
    </location>
</feature>
<feature type="splice variant" id="VSP_019279" description="In isoform 3." evidence="8">
    <location>
        <begin position="164"/>
        <end position="202"/>
    </location>
</feature>
<feature type="sequence conflict" description="In Ref. 1; CAA62012." evidence="10" ref="1">
    <original>A</original>
    <variation>R</variation>
    <location>
        <position position="199"/>
    </location>
</feature>
<sequence>MSGRSVRAETRSRAKDDIKKVMAAIEKVRKWEKKWVTVGDTSLRIFKWVPVTDSKEKEKSKSNSSAAREPNGFPSDASANSSLLLEFQDENSNQSSVSDVYQLKVDSSTNSSPSPQQSESLSPAHTSDFRTDDSQPPTLGQEILEEPSLPSSEVADEPPTLTKEEPVPLETQVVEEEEDSGAPPLKRFCVDQPTVPQTASES</sequence>
<evidence type="ECO:0000250" key="1">
    <source>
        <dbReference type="UniProtKB" id="Q921K9"/>
    </source>
</evidence>
<evidence type="ECO:0000256" key="2">
    <source>
        <dbReference type="SAM" id="MobiDB-lite"/>
    </source>
</evidence>
<evidence type="ECO:0000269" key="3">
    <source>
    </source>
</evidence>
<evidence type="ECO:0000269" key="4">
    <source>
    </source>
</evidence>
<evidence type="ECO:0000269" key="5">
    <source>
    </source>
</evidence>
<evidence type="ECO:0000269" key="6">
    <source>
    </source>
</evidence>
<evidence type="ECO:0000303" key="7">
    <source>
    </source>
</evidence>
<evidence type="ECO:0000303" key="8">
    <source>
    </source>
</evidence>
<evidence type="ECO:0000303" key="9">
    <source ref="4"/>
</evidence>
<evidence type="ECO:0000305" key="10"/>
<evidence type="ECO:0007744" key="11">
    <source>
    </source>
</evidence>
<evidence type="ECO:0007744" key="12">
    <source>
    </source>
</evidence>
<evidence type="ECO:0007744" key="13">
    <source>
    </source>
</evidence>
<name>BCL7B_HUMAN</name>
<organism>
    <name type="scientific">Homo sapiens</name>
    <name type="common">Human</name>
    <dbReference type="NCBI Taxonomy" id="9606"/>
    <lineage>
        <taxon>Eukaryota</taxon>
        <taxon>Metazoa</taxon>
        <taxon>Chordata</taxon>
        <taxon>Craniata</taxon>
        <taxon>Vertebrata</taxon>
        <taxon>Euteleostomi</taxon>
        <taxon>Mammalia</taxon>
        <taxon>Eutheria</taxon>
        <taxon>Euarchontoglires</taxon>
        <taxon>Primates</taxon>
        <taxon>Haplorrhini</taxon>
        <taxon>Catarrhini</taxon>
        <taxon>Hominidae</taxon>
        <taxon>Homo</taxon>
    </lineage>
</organism>
<protein>
    <recommendedName>
        <fullName>B-cell CLL/lymphoma 7 protein family member B</fullName>
    </recommendedName>
    <allergenName>Hom s 3</allergenName>
</protein>
<reference key="1">
    <citation type="journal article" date="1996" name="Blood">
        <title>Molecular cloning of complex chromosomal translocation t(8;14;12)(q24.1;q32.3;q24.1) in a Burkitt lymphoma cell line defines a new gene (BCL7A) with homology to caldesmon.</title>
        <authorList>
            <person name="Zani V.J."/>
            <person name="Asou N."/>
            <person name="Jadayel D."/>
            <person name="Heward J.M."/>
            <person name="Shipley J."/>
            <person name="Nacheva E."/>
            <person name="Takasuki K."/>
            <person name="Catovsky D."/>
            <person name="Dyer M.J.S."/>
        </authorList>
    </citation>
    <scope>NUCLEOTIDE SEQUENCE [MRNA] (ISOFORM 1)</scope>
    <source>
        <tissue>Brain</tissue>
    </source>
</reference>
<reference key="2">
    <citation type="journal article" date="1998" name="Gene">
        <title>The BCL7 gene family: deletion of BCL7B in Williams syndrome.</title>
        <authorList>
            <person name="Jadayel D.M."/>
            <person name="Osborne L.R."/>
            <person name="Coignet L.J.A."/>
            <person name="Zani V.J."/>
            <person name="Tsui L.-C."/>
            <person name="Scherer S.W."/>
            <person name="Dyer M.J.S."/>
        </authorList>
    </citation>
    <scope>NUCLEOTIDE SEQUENCE [MRNA] (ISOFORM 3)</scope>
    <scope>DISEASE</scope>
    <scope>TISSUE SPECIFICITY</scope>
    <source>
        <tissue>Skeletal muscle</tissue>
    </source>
</reference>
<reference key="3">
    <citation type="journal article" date="1998" name="Hum. Genet.">
        <title>Complete physical map of the common deletion region in Williams syndrome and identification and characterization of three novel genes.</title>
        <authorList>
            <person name="Meng X."/>
            <person name="Lu X."/>
            <person name="Li Z."/>
            <person name="Green E.D."/>
            <person name="Massa H."/>
            <person name="Trask B.J."/>
            <person name="Morris C.A."/>
            <person name="Keating M.T."/>
        </authorList>
    </citation>
    <scope>NUCLEOTIDE SEQUENCE [MRNA] (ISOFORM 1)</scope>
    <scope>DISEASE</scope>
    <scope>TISSUE SPECIFICITY</scope>
</reference>
<reference key="4">
    <citation type="submission" date="2003-04" db="EMBL/GenBank/DDBJ databases">
        <title>Full-length cDNA libraries and normalization.</title>
        <authorList>
            <person name="Li W.B."/>
            <person name="Gruber C."/>
            <person name="Jessee J."/>
            <person name="Polayes D."/>
        </authorList>
    </citation>
    <scope>NUCLEOTIDE SEQUENCE [LARGE SCALE MRNA] (ISOFORM 4)</scope>
    <source>
        <tissue>Neuroblastoma</tissue>
    </source>
</reference>
<reference key="5">
    <citation type="journal article" date="2004" name="Nat. Genet.">
        <title>Complete sequencing and characterization of 21,243 full-length human cDNAs.</title>
        <authorList>
            <person name="Ota T."/>
            <person name="Suzuki Y."/>
            <person name="Nishikawa T."/>
            <person name="Otsuki T."/>
            <person name="Sugiyama T."/>
            <person name="Irie R."/>
            <person name="Wakamatsu A."/>
            <person name="Hayashi K."/>
            <person name="Sato H."/>
            <person name="Nagai K."/>
            <person name="Kimura K."/>
            <person name="Makita H."/>
            <person name="Sekine M."/>
            <person name="Obayashi M."/>
            <person name="Nishi T."/>
            <person name="Shibahara T."/>
            <person name="Tanaka T."/>
            <person name="Ishii S."/>
            <person name="Yamamoto J."/>
            <person name="Saito K."/>
            <person name="Kawai Y."/>
            <person name="Isono Y."/>
            <person name="Nakamura Y."/>
            <person name="Nagahari K."/>
            <person name="Murakami K."/>
            <person name="Yasuda T."/>
            <person name="Iwayanagi T."/>
            <person name="Wagatsuma M."/>
            <person name="Shiratori A."/>
            <person name="Sudo H."/>
            <person name="Hosoiri T."/>
            <person name="Kaku Y."/>
            <person name="Kodaira H."/>
            <person name="Kondo H."/>
            <person name="Sugawara M."/>
            <person name="Takahashi M."/>
            <person name="Kanda K."/>
            <person name="Yokoi T."/>
            <person name="Furuya T."/>
            <person name="Kikkawa E."/>
            <person name="Omura Y."/>
            <person name="Abe K."/>
            <person name="Kamihara K."/>
            <person name="Katsuta N."/>
            <person name="Sato K."/>
            <person name="Tanikawa M."/>
            <person name="Yamazaki M."/>
            <person name="Ninomiya K."/>
            <person name="Ishibashi T."/>
            <person name="Yamashita H."/>
            <person name="Murakawa K."/>
            <person name="Fujimori K."/>
            <person name="Tanai H."/>
            <person name="Kimata M."/>
            <person name="Watanabe M."/>
            <person name="Hiraoka S."/>
            <person name="Chiba Y."/>
            <person name="Ishida S."/>
            <person name="Ono Y."/>
            <person name="Takiguchi S."/>
            <person name="Watanabe S."/>
            <person name="Yosida M."/>
            <person name="Hotuta T."/>
            <person name="Kusano J."/>
            <person name="Kanehori K."/>
            <person name="Takahashi-Fujii A."/>
            <person name="Hara H."/>
            <person name="Tanase T.-O."/>
            <person name="Nomura Y."/>
            <person name="Togiya S."/>
            <person name="Komai F."/>
            <person name="Hara R."/>
            <person name="Takeuchi K."/>
            <person name="Arita M."/>
            <person name="Imose N."/>
            <person name="Musashino K."/>
            <person name="Yuuki H."/>
            <person name="Oshima A."/>
            <person name="Sasaki N."/>
            <person name="Aotsuka S."/>
            <person name="Yoshikawa Y."/>
            <person name="Matsunawa H."/>
            <person name="Ichihara T."/>
            <person name="Shiohata N."/>
            <person name="Sano S."/>
            <person name="Moriya S."/>
            <person name="Momiyama H."/>
            <person name="Satoh N."/>
            <person name="Takami S."/>
            <person name="Terashima Y."/>
            <person name="Suzuki O."/>
            <person name="Nakagawa S."/>
            <person name="Senoh A."/>
            <person name="Mizoguchi H."/>
            <person name="Goto Y."/>
            <person name="Shimizu F."/>
            <person name="Wakebe H."/>
            <person name="Hishigaki H."/>
            <person name="Watanabe T."/>
            <person name="Sugiyama A."/>
            <person name="Takemoto M."/>
            <person name="Kawakami B."/>
            <person name="Yamazaki M."/>
            <person name="Watanabe K."/>
            <person name="Kumagai A."/>
            <person name="Itakura S."/>
            <person name="Fukuzumi Y."/>
            <person name="Fujimori Y."/>
            <person name="Komiyama M."/>
            <person name="Tashiro H."/>
            <person name="Tanigami A."/>
            <person name="Fujiwara T."/>
            <person name="Ono T."/>
            <person name="Yamada K."/>
            <person name="Fujii Y."/>
            <person name="Ozaki K."/>
            <person name="Hirao M."/>
            <person name="Ohmori Y."/>
            <person name="Kawabata A."/>
            <person name="Hikiji T."/>
            <person name="Kobatake N."/>
            <person name="Inagaki H."/>
            <person name="Ikema Y."/>
            <person name="Okamoto S."/>
            <person name="Okitani R."/>
            <person name="Kawakami T."/>
            <person name="Noguchi S."/>
            <person name="Itoh T."/>
            <person name="Shigeta K."/>
            <person name="Senba T."/>
            <person name="Matsumura K."/>
            <person name="Nakajima Y."/>
            <person name="Mizuno T."/>
            <person name="Morinaga M."/>
            <person name="Sasaki M."/>
            <person name="Togashi T."/>
            <person name="Oyama M."/>
            <person name="Hata H."/>
            <person name="Watanabe M."/>
            <person name="Komatsu T."/>
            <person name="Mizushima-Sugano J."/>
            <person name="Satoh T."/>
            <person name="Shirai Y."/>
            <person name="Takahashi Y."/>
            <person name="Nakagawa K."/>
            <person name="Okumura K."/>
            <person name="Nagase T."/>
            <person name="Nomura N."/>
            <person name="Kikuchi H."/>
            <person name="Masuho Y."/>
            <person name="Yamashita R."/>
            <person name="Nakai K."/>
            <person name="Yada T."/>
            <person name="Nakamura Y."/>
            <person name="Ohara O."/>
            <person name="Isogai T."/>
            <person name="Sugano S."/>
        </authorList>
    </citation>
    <scope>NUCLEOTIDE SEQUENCE [LARGE SCALE MRNA] (ISOFORMS 1 AND 2)</scope>
    <source>
        <tissue>Subthalamic nucleus</tissue>
        <tissue>Thalamus</tissue>
    </source>
</reference>
<reference key="6">
    <citation type="journal article" date="2003" name="Nature">
        <title>The DNA sequence of human chromosome 7.</title>
        <authorList>
            <person name="Hillier L.W."/>
            <person name="Fulton R.S."/>
            <person name="Fulton L.A."/>
            <person name="Graves T.A."/>
            <person name="Pepin K.H."/>
            <person name="Wagner-McPherson C."/>
            <person name="Layman D."/>
            <person name="Maas J."/>
            <person name="Jaeger S."/>
            <person name="Walker R."/>
            <person name="Wylie K."/>
            <person name="Sekhon M."/>
            <person name="Becker M.C."/>
            <person name="O'Laughlin M.D."/>
            <person name="Schaller M.E."/>
            <person name="Fewell G.A."/>
            <person name="Delehaunty K.D."/>
            <person name="Miner T.L."/>
            <person name="Nash W.E."/>
            <person name="Cordes M."/>
            <person name="Du H."/>
            <person name="Sun H."/>
            <person name="Edwards J."/>
            <person name="Bradshaw-Cordum H."/>
            <person name="Ali J."/>
            <person name="Andrews S."/>
            <person name="Isak A."/>
            <person name="Vanbrunt A."/>
            <person name="Nguyen C."/>
            <person name="Du F."/>
            <person name="Lamar B."/>
            <person name="Courtney L."/>
            <person name="Kalicki J."/>
            <person name="Ozersky P."/>
            <person name="Bielicki L."/>
            <person name="Scott K."/>
            <person name="Holmes A."/>
            <person name="Harkins R."/>
            <person name="Harris A."/>
            <person name="Strong C.M."/>
            <person name="Hou S."/>
            <person name="Tomlinson C."/>
            <person name="Dauphin-Kohlberg S."/>
            <person name="Kozlowicz-Reilly A."/>
            <person name="Leonard S."/>
            <person name="Rohlfing T."/>
            <person name="Rock S.M."/>
            <person name="Tin-Wollam A.-M."/>
            <person name="Abbott A."/>
            <person name="Minx P."/>
            <person name="Maupin R."/>
            <person name="Strowmatt C."/>
            <person name="Latreille P."/>
            <person name="Miller N."/>
            <person name="Johnson D."/>
            <person name="Murray J."/>
            <person name="Woessner J.P."/>
            <person name="Wendl M.C."/>
            <person name="Yang S.-P."/>
            <person name="Schultz B.R."/>
            <person name="Wallis J.W."/>
            <person name="Spieth J."/>
            <person name="Bieri T.A."/>
            <person name="Nelson J.O."/>
            <person name="Berkowicz N."/>
            <person name="Wohldmann P.E."/>
            <person name="Cook L.L."/>
            <person name="Hickenbotham M.T."/>
            <person name="Eldred J."/>
            <person name="Williams D."/>
            <person name="Bedell J.A."/>
            <person name="Mardis E.R."/>
            <person name="Clifton S.W."/>
            <person name="Chissoe S.L."/>
            <person name="Marra M.A."/>
            <person name="Raymond C."/>
            <person name="Haugen E."/>
            <person name="Gillett W."/>
            <person name="Zhou Y."/>
            <person name="James R."/>
            <person name="Phelps K."/>
            <person name="Iadanoto S."/>
            <person name="Bubb K."/>
            <person name="Simms E."/>
            <person name="Levy R."/>
            <person name="Clendenning J."/>
            <person name="Kaul R."/>
            <person name="Kent W.J."/>
            <person name="Furey T.S."/>
            <person name="Baertsch R.A."/>
            <person name="Brent M.R."/>
            <person name="Keibler E."/>
            <person name="Flicek P."/>
            <person name="Bork P."/>
            <person name="Suyama M."/>
            <person name="Bailey J.A."/>
            <person name="Portnoy M.E."/>
            <person name="Torrents D."/>
            <person name="Chinwalla A.T."/>
            <person name="Gish W.R."/>
            <person name="Eddy S.R."/>
            <person name="McPherson J.D."/>
            <person name="Olson M.V."/>
            <person name="Eichler E.E."/>
            <person name="Green E.D."/>
            <person name="Waterston R.H."/>
            <person name="Wilson R.K."/>
        </authorList>
    </citation>
    <scope>NUCLEOTIDE SEQUENCE [LARGE SCALE GENOMIC DNA]</scope>
</reference>
<reference key="7">
    <citation type="submission" date="2005-09" db="EMBL/GenBank/DDBJ databases">
        <authorList>
            <person name="Mural R.J."/>
            <person name="Istrail S."/>
            <person name="Sutton G.G."/>
            <person name="Florea L."/>
            <person name="Halpern A.L."/>
            <person name="Mobarry C.M."/>
            <person name="Lippert R."/>
            <person name="Walenz B."/>
            <person name="Shatkay H."/>
            <person name="Dew I."/>
            <person name="Miller J.R."/>
            <person name="Flanigan M.J."/>
            <person name="Edwards N.J."/>
            <person name="Bolanos R."/>
            <person name="Fasulo D."/>
            <person name="Halldorsson B.V."/>
            <person name="Hannenhalli S."/>
            <person name="Turner R."/>
            <person name="Yooseph S."/>
            <person name="Lu F."/>
            <person name="Nusskern D.R."/>
            <person name="Shue B.C."/>
            <person name="Zheng X.H."/>
            <person name="Zhong F."/>
            <person name="Delcher A.L."/>
            <person name="Huson D.H."/>
            <person name="Kravitz S.A."/>
            <person name="Mouchard L."/>
            <person name="Reinert K."/>
            <person name="Remington K.A."/>
            <person name="Clark A.G."/>
            <person name="Waterman M.S."/>
            <person name="Eichler E.E."/>
            <person name="Adams M.D."/>
            <person name="Hunkapiller M.W."/>
            <person name="Myers E.W."/>
            <person name="Venter J.C."/>
        </authorList>
    </citation>
    <scope>NUCLEOTIDE SEQUENCE [LARGE SCALE GENOMIC DNA]</scope>
</reference>
<reference key="8">
    <citation type="journal article" date="2004" name="Genome Res.">
        <title>The status, quality, and expansion of the NIH full-length cDNA project: the Mammalian Gene Collection (MGC).</title>
        <authorList>
            <consortium name="The MGC Project Team"/>
        </authorList>
    </citation>
    <scope>NUCLEOTIDE SEQUENCE [LARGE SCALE MRNA] (ISOFORM 1)</scope>
    <source>
        <tissue>Cervix</tissue>
        <tissue>Pancreas</tissue>
        <tissue>Placenta</tissue>
    </source>
</reference>
<reference key="9">
    <citation type="journal article" date="1998" name="FASEB J.">
        <title>Isolation of cDNA clones coding for IgE autoantigens with serum IgE from atopic dermatitis patients.</title>
        <authorList>
            <person name="Natter S."/>
            <person name="Seiberler S."/>
            <person name="Hufnagl P."/>
            <person name="Binder B.R."/>
            <person name="Hirschl A.M."/>
            <person name="Ring J."/>
            <person name="Abeck D."/>
            <person name="Schmidt T."/>
            <person name="Valent P."/>
            <person name="Valenta R."/>
        </authorList>
    </citation>
    <scope>ALLERGEN</scope>
</reference>
<reference key="10">
    <citation type="journal article" date="2008" name="Proc. Natl. Acad. Sci. U.S.A.">
        <title>A quantitative atlas of mitotic phosphorylation.</title>
        <authorList>
            <person name="Dephoure N."/>
            <person name="Zhou C."/>
            <person name="Villen J."/>
            <person name="Beausoleil S.A."/>
            <person name="Bakalarski C.E."/>
            <person name="Elledge S.J."/>
            <person name="Gygi S.P."/>
        </authorList>
    </citation>
    <scope>PHOSPHORYLATION [LARGE SCALE ANALYSIS] AT SER-114</scope>
    <scope>IDENTIFICATION BY MASS SPECTROMETRY [LARGE SCALE ANALYSIS]</scope>
    <source>
        <tissue>Cervix carcinoma</tissue>
    </source>
</reference>
<reference key="11">
    <citation type="journal article" date="2009" name="Sci. Signal.">
        <title>Quantitative phosphoproteomic analysis of T cell receptor signaling reveals system-wide modulation of protein-protein interactions.</title>
        <authorList>
            <person name="Mayya V."/>
            <person name="Lundgren D.H."/>
            <person name="Hwang S.-I."/>
            <person name="Rezaul K."/>
            <person name="Wu L."/>
            <person name="Eng J.K."/>
            <person name="Rodionov V."/>
            <person name="Han D.K."/>
        </authorList>
    </citation>
    <scope>PHOSPHORYLATION [LARGE SCALE ANALYSIS] AT SER-114; SER-118 AND SER-122</scope>
    <scope>IDENTIFICATION BY MASS SPECTROMETRY [LARGE SCALE ANALYSIS]</scope>
    <source>
        <tissue>Leukemic T-cell</tissue>
    </source>
</reference>
<reference key="12">
    <citation type="journal article" date="2010" name="Sci. Signal.">
        <title>Quantitative phosphoproteomics reveals widespread full phosphorylation site occupancy during mitosis.</title>
        <authorList>
            <person name="Olsen J.V."/>
            <person name="Vermeulen M."/>
            <person name="Santamaria A."/>
            <person name="Kumar C."/>
            <person name="Miller M.L."/>
            <person name="Jensen L.J."/>
            <person name="Gnad F."/>
            <person name="Cox J."/>
            <person name="Jensen T.S."/>
            <person name="Nigg E.A."/>
            <person name="Brunak S."/>
            <person name="Mann M."/>
        </authorList>
    </citation>
    <scope>IDENTIFICATION BY MASS SPECTROMETRY [LARGE SCALE ANALYSIS]</scope>
    <source>
        <tissue>Cervix carcinoma</tissue>
    </source>
</reference>
<reference key="13">
    <citation type="journal article" date="2011" name="Sci. Signal.">
        <title>System-wide temporal characterization of the proteome and phosphoproteome of human embryonic stem cell differentiation.</title>
        <authorList>
            <person name="Rigbolt K.T."/>
            <person name="Prokhorova T.A."/>
            <person name="Akimov V."/>
            <person name="Henningsen J."/>
            <person name="Johansen P.T."/>
            <person name="Kratchmarova I."/>
            <person name="Kassem M."/>
            <person name="Mann M."/>
            <person name="Olsen J.V."/>
            <person name="Blagoev B."/>
        </authorList>
    </citation>
    <scope>IDENTIFICATION BY MASS SPECTROMETRY [LARGE SCALE ANALYSIS]</scope>
</reference>
<reference key="14">
    <citation type="journal article" date="2013" name="J. Proteome Res.">
        <title>Toward a comprehensive characterization of a human cancer cell phosphoproteome.</title>
        <authorList>
            <person name="Zhou H."/>
            <person name="Di Palma S."/>
            <person name="Preisinger C."/>
            <person name="Peng M."/>
            <person name="Polat A.N."/>
            <person name="Heck A.J."/>
            <person name="Mohammed S."/>
        </authorList>
    </citation>
    <scope>PHOSPHORYLATION [LARGE SCALE ANALYSIS] AT SER-114 AND SER-122</scope>
    <scope>IDENTIFICATION BY MASS SPECTROMETRY [LARGE SCALE ANALYSIS]</scope>
    <source>
        <tissue>Cervix carcinoma</tissue>
        <tissue>Erythroleukemia</tissue>
    </source>
</reference>
<reference key="15">
    <citation type="journal article" date="2014" name="J. Proteomics">
        <title>An enzyme assisted RP-RPLC approach for in-depth analysis of human liver phosphoproteome.</title>
        <authorList>
            <person name="Bian Y."/>
            <person name="Song C."/>
            <person name="Cheng K."/>
            <person name="Dong M."/>
            <person name="Wang F."/>
            <person name="Huang J."/>
            <person name="Sun D."/>
            <person name="Wang L."/>
            <person name="Ye M."/>
            <person name="Zou H."/>
        </authorList>
    </citation>
    <scope>IDENTIFICATION BY MASS SPECTROMETRY [LARGE SCALE ANALYSIS]</scope>
    <source>
        <tissue>Liver</tissue>
    </source>
</reference>
<reference key="16">
    <citation type="journal article" date="2015" name="PLoS Genet.">
        <title>The tumor suppressor BCL7B functions in the Wnt signaling pathway.</title>
        <authorList>
            <person name="Uehara T."/>
            <person name="Kage-Nakadai E."/>
            <person name="Yoshina S."/>
            <person name="Imae R."/>
            <person name="Mitani S."/>
        </authorList>
    </citation>
    <scope>FUNCTION</scope>
</reference>
<accession>Q9BQE9</accession>
<accession>A8K226</accession>
<accession>C9JWD3</accession>
<accession>D3DXF0</accession>
<accession>O43769</accession>
<accession>Q13845</accession>
<accession>Q6ZW75</accession>